<protein>
    <recommendedName>
        <fullName evidence="1">Elongation factor 1-beta</fullName>
        <shortName evidence="1">EF-1-beta</shortName>
    </recommendedName>
    <alternativeName>
        <fullName evidence="1">aEF-1beta</fullName>
    </alternativeName>
</protein>
<feature type="chain" id="PRO_1000006617" description="Elongation factor 1-beta">
    <location>
        <begin position="1"/>
        <end position="92"/>
    </location>
</feature>
<evidence type="ECO:0000255" key="1">
    <source>
        <dbReference type="HAMAP-Rule" id="MF_00043"/>
    </source>
</evidence>
<reference key="1">
    <citation type="journal article" date="2007" name="Archaea">
        <title>The genome of Hyperthermus butylicus: a sulfur-reducing, peptide fermenting, neutrophilic Crenarchaeote growing up to 108 degrees C.</title>
        <authorList>
            <person name="Bruegger K."/>
            <person name="Chen L."/>
            <person name="Stark M."/>
            <person name="Zibat A."/>
            <person name="Redder P."/>
            <person name="Ruepp A."/>
            <person name="Awayez M."/>
            <person name="She Q."/>
            <person name="Garrett R.A."/>
            <person name="Klenk H.-P."/>
        </authorList>
    </citation>
    <scope>NUCLEOTIDE SEQUENCE [LARGE SCALE GENOMIC DNA]</scope>
    <source>
        <strain>DSM 5456 / JCM 9403 / PLM1-5</strain>
    </source>
</reference>
<proteinExistence type="inferred from homology"/>
<sequence length="92" mass="10352">MARVLVVTTVYPSSPEINLDELVEKIKSKLPSDYEITRYDKVPIAFGLNALKLYVIIPEESEGGTSKLEEILQSVEGVEEIEVEAVHRISEY</sequence>
<comment type="function">
    <text evidence="1">Promotes the exchange of GDP for GTP in EF-1-alpha/GDP, thus allowing the regeneration of EF-1-alpha/GTP that could then be used to form the ternary complex EF-1-alpha/GTP/AAtRNA.</text>
</comment>
<comment type="similarity">
    <text evidence="1">Belongs to the EF-1-beta/EF-1-delta family.</text>
</comment>
<accession>A2BMH3</accession>
<gene>
    <name evidence="1" type="primary">ef1b</name>
    <name type="ordered locus">Hbut_1357</name>
</gene>
<name>EF1B_HYPBU</name>
<dbReference type="EMBL" id="CP000493">
    <property type="protein sequence ID" value="ABM81184.1"/>
    <property type="molecule type" value="Genomic_DNA"/>
</dbReference>
<dbReference type="RefSeq" id="WP_011822502.1">
    <property type="nucleotide sequence ID" value="NC_008818.1"/>
</dbReference>
<dbReference type="SMR" id="A2BMH3"/>
<dbReference type="STRING" id="415426.Hbut_1357"/>
<dbReference type="EnsemblBacteria" id="ABM81184">
    <property type="protein sequence ID" value="ABM81184"/>
    <property type="gene ID" value="Hbut_1357"/>
</dbReference>
<dbReference type="GeneID" id="4781829"/>
<dbReference type="KEGG" id="hbu:Hbut_1357"/>
<dbReference type="eggNOG" id="arCOG01988">
    <property type="taxonomic scope" value="Archaea"/>
</dbReference>
<dbReference type="HOGENOM" id="CLU_165896_1_0_2"/>
<dbReference type="OrthoDB" id="84643at2157"/>
<dbReference type="Proteomes" id="UP000002593">
    <property type="component" value="Chromosome"/>
</dbReference>
<dbReference type="GO" id="GO:0003746">
    <property type="term" value="F:translation elongation factor activity"/>
    <property type="evidence" value="ECO:0007669"/>
    <property type="project" value="UniProtKB-UniRule"/>
</dbReference>
<dbReference type="CDD" id="cd00292">
    <property type="entry name" value="EF1B"/>
    <property type="match status" value="1"/>
</dbReference>
<dbReference type="Gene3D" id="3.30.70.60">
    <property type="match status" value="1"/>
</dbReference>
<dbReference type="HAMAP" id="MF_00043">
    <property type="entry name" value="EF1_beta"/>
    <property type="match status" value="1"/>
</dbReference>
<dbReference type="InterPro" id="IPR036219">
    <property type="entry name" value="eEF-1beta-like_sf"/>
</dbReference>
<dbReference type="InterPro" id="IPR014038">
    <property type="entry name" value="EF1B_bsu/dsu_GNE"/>
</dbReference>
<dbReference type="InterPro" id="IPR014717">
    <property type="entry name" value="Transl_elong_EF1B/ribsomal_bS6"/>
</dbReference>
<dbReference type="InterPro" id="IPR004542">
    <property type="entry name" value="Transl_elong_EF1B_B_arc"/>
</dbReference>
<dbReference type="NCBIfam" id="TIGR00489">
    <property type="entry name" value="aEF-1_beta"/>
    <property type="match status" value="1"/>
</dbReference>
<dbReference type="NCBIfam" id="NF001670">
    <property type="entry name" value="PRK00435.1"/>
    <property type="match status" value="1"/>
</dbReference>
<dbReference type="PANTHER" id="PTHR39647">
    <property type="entry name" value="ELONGATION FACTOR 1-BETA"/>
    <property type="match status" value="1"/>
</dbReference>
<dbReference type="PANTHER" id="PTHR39647:SF1">
    <property type="entry name" value="ELONGATION FACTOR 1-BETA"/>
    <property type="match status" value="1"/>
</dbReference>
<dbReference type="Pfam" id="PF00736">
    <property type="entry name" value="EF1_GNE"/>
    <property type="match status" value="1"/>
</dbReference>
<dbReference type="PIRSF" id="PIRSF006521">
    <property type="entry name" value="Transl_elong_EF1B_B_arc"/>
    <property type="match status" value="1"/>
</dbReference>
<dbReference type="SMART" id="SM00888">
    <property type="entry name" value="EF1_GNE"/>
    <property type="match status" value="1"/>
</dbReference>
<dbReference type="SUPFAM" id="SSF54984">
    <property type="entry name" value="eEF-1beta-like"/>
    <property type="match status" value="1"/>
</dbReference>
<keyword id="KW-0251">Elongation factor</keyword>
<keyword id="KW-0648">Protein biosynthesis</keyword>
<keyword id="KW-1185">Reference proteome</keyword>
<organism>
    <name type="scientific">Hyperthermus butylicus (strain DSM 5456 / JCM 9403 / PLM1-5)</name>
    <dbReference type="NCBI Taxonomy" id="415426"/>
    <lineage>
        <taxon>Archaea</taxon>
        <taxon>Thermoproteota</taxon>
        <taxon>Thermoprotei</taxon>
        <taxon>Desulfurococcales</taxon>
        <taxon>Pyrodictiaceae</taxon>
        <taxon>Hyperthermus</taxon>
    </lineage>
</organism>